<sequence length="132" mass="14882">MVMTDPIADMLTRIRNANMVRHEKLEVPASKIKKEIAELLKREGFIRDVEYIEDNKQGILRIFLKYGANNERVITGLKRISKPGLRVYAKADEVPRVLNGLGIALVSTSKGVMTDKDARQLQTGGEVVAYVW</sequence>
<comment type="function">
    <text evidence="1">One of the primary rRNA binding proteins, it binds directly to 16S rRNA central domain where it helps coordinate assembly of the platform of the 30S subunit.</text>
</comment>
<comment type="subunit">
    <text evidence="1">Part of the 30S ribosomal subunit. Contacts proteins S5 and S12.</text>
</comment>
<comment type="similarity">
    <text evidence="1">Belongs to the universal ribosomal protein uS8 family.</text>
</comment>
<reference key="1">
    <citation type="submission" date="2008-10" db="EMBL/GenBank/DDBJ databases">
        <title>Genome sequence of Bacillus anthracis str. CDC 684.</title>
        <authorList>
            <person name="Dodson R.J."/>
            <person name="Munk A.C."/>
            <person name="Brettin T."/>
            <person name="Bruce D."/>
            <person name="Detter C."/>
            <person name="Tapia R."/>
            <person name="Han C."/>
            <person name="Sutton G."/>
            <person name="Sims D."/>
        </authorList>
    </citation>
    <scope>NUCLEOTIDE SEQUENCE [LARGE SCALE GENOMIC DNA]</scope>
    <source>
        <strain>CDC 684 / NRRL 3495</strain>
    </source>
</reference>
<gene>
    <name evidence="1" type="primary">rpsH</name>
    <name type="ordered locus">BAMEG_0140</name>
</gene>
<dbReference type="EMBL" id="CP001215">
    <property type="protein sequence ID" value="ACP13296.1"/>
    <property type="molecule type" value="Genomic_DNA"/>
</dbReference>
<dbReference type="RefSeq" id="WP_000245511.1">
    <property type="nucleotide sequence ID" value="NC_012581.1"/>
</dbReference>
<dbReference type="SMR" id="C3LJ96"/>
<dbReference type="GeneID" id="93010929"/>
<dbReference type="KEGG" id="bah:BAMEG_0140"/>
<dbReference type="HOGENOM" id="CLU_098428_0_2_9"/>
<dbReference type="GO" id="GO:1990904">
    <property type="term" value="C:ribonucleoprotein complex"/>
    <property type="evidence" value="ECO:0007669"/>
    <property type="project" value="UniProtKB-KW"/>
</dbReference>
<dbReference type="GO" id="GO:0005840">
    <property type="term" value="C:ribosome"/>
    <property type="evidence" value="ECO:0007669"/>
    <property type="project" value="UniProtKB-KW"/>
</dbReference>
<dbReference type="GO" id="GO:0019843">
    <property type="term" value="F:rRNA binding"/>
    <property type="evidence" value="ECO:0007669"/>
    <property type="project" value="UniProtKB-UniRule"/>
</dbReference>
<dbReference type="GO" id="GO:0003735">
    <property type="term" value="F:structural constituent of ribosome"/>
    <property type="evidence" value="ECO:0007669"/>
    <property type="project" value="InterPro"/>
</dbReference>
<dbReference type="GO" id="GO:0006412">
    <property type="term" value="P:translation"/>
    <property type="evidence" value="ECO:0007669"/>
    <property type="project" value="UniProtKB-UniRule"/>
</dbReference>
<dbReference type="FunFam" id="3.30.1370.30:FF:000002">
    <property type="entry name" value="30S ribosomal protein S8"/>
    <property type="match status" value="1"/>
</dbReference>
<dbReference type="FunFam" id="3.30.1490.10:FF:000001">
    <property type="entry name" value="30S ribosomal protein S8"/>
    <property type="match status" value="1"/>
</dbReference>
<dbReference type="Gene3D" id="3.30.1370.30">
    <property type="match status" value="1"/>
</dbReference>
<dbReference type="Gene3D" id="3.30.1490.10">
    <property type="match status" value="1"/>
</dbReference>
<dbReference type="HAMAP" id="MF_01302_B">
    <property type="entry name" value="Ribosomal_uS8_B"/>
    <property type="match status" value="1"/>
</dbReference>
<dbReference type="InterPro" id="IPR000630">
    <property type="entry name" value="Ribosomal_uS8"/>
</dbReference>
<dbReference type="InterPro" id="IPR047863">
    <property type="entry name" value="Ribosomal_uS8_CS"/>
</dbReference>
<dbReference type="InterPro" id="IPR035987">
    <property type="entry name" value="Ribosomal_uS8_sf"/>
</dbReference>
<dbReference type="NCBIfam" id="NF001109">
    <property type="entry name" value="PRK00136.1"/>
    <property type="match status" value="1"/>
</dbReference>
<dbReference type="PANTHER" id="PTHR11758">
    <property type="entry name" value="40S RIBOSOMAL PROTEIN S15A"/>
    <property type="match status" value="1"/>
</dbReference>
<dbReference type="Pfam" id="PF00410">
    <property type="entry name" value="Ribosomal_S8"/>
    <property type="match status" value="1"/>
</dbReference>
<dbReference type="SUPFAM" id="SSF56047">
    <property type="entry name" value="Ribosomal protein S8"/>
    <property type="match status" value="1"/>
</dbReference>
<dbReference type="PROSITE" id="PS00053">
    <property type="entry name" value="RIBOSOMAL_S8"/>
    <property type="match status" value="1"/>
</dbReference>
<evidence type="ECO:0000255" key="1">
    <source>
        <dbReference type="HAMAP-Rule" id="MF_01302"/>
    </source>
</evidence>
<evidence type="ECO:0000305" key="2"/>
<keyword id="KW-0687">Ribonucleoprotein</keyword>
<keyword id="KW-0689">Ribosomal protein</keyword>
<keyword id="KW-0694">RNA-binding</keyword>
<keyword id="KW-0699">rRNA-binding</keyword>
<protein>
    <recommendedName>
        <fullName evidence="1">Small ribosomal subunit protein uS8</fullName>
    </recommendedName>
    <alternativeName>
        <fullName evidence="2">30S ribosomal protein S8</fullName>
    </alternativeName>
</protein>
<name>RS8_BACAC</name>
<feature type="chain" id="PRO_1000165305" description="Small ribosomal subunit protein uS8">
    <location>
        <begin position="1"/>
        <end position="132"/>
    </location>
</feature>
<proteinExistence type="inferred from homology"/>
<organism>
    <name type="scientific">Bacillus anthracis (strain CDC 684 / NRRL 3495)</name>
    <dbReference type="NCBI Taxonomy" id="568206"/>
    <lineage>
        <taxon>Bacteria</taxon>
        <taxon>Bacillati</taxon>
        <taxon>Bacillota</taxon>
        <taxon>Bacilli</taxon>
        <taxon>Bacillales</taxon>
        <taxon>Bacillaceae</taxon>
        <taxon>Bacillus</taxon>
        <taxon>Bacillus cereus group</taxon>
    </lineage>
</organism>
<accession>C3LJ96</accession>